<sequence length="366" mass="40532">MKDLTLNDLPIREELRGQSAYGAPQLDVDVRLNTNENPYPPSEALVEELARVVAEQASNLNRYPERDAVELRTELARYITKCTGVPVTYEQLWAANGSNEVLQQLLQAFGGPGRTVLGFQPSYSMHPILAQGTQTTFINCPRDKEFRIDVDAALAAITTHQPNIVFVTTPNNPTGDVTSLDTIKKILDVAPGIVIVDEAYAEFSEQPSAISLLENYPTKLVVSRTMSKAFDFAGGRLGYFVAHKAFIDAVMLVRLPYHLSQLSQAAAIVALRHSEETLATVAKLVAERKRVQQGLLELGFEIVPSESNFLFFGHFEDQHAAWQAFLDRKVLIRDVSVSGYLRATVGLPEENDAFLNAAREVAQQFL</sequence>
<protein>
    <recommendedName>
        <fullName evidence="1">Histidinol-phosphate aminotransferase</fullName>
        <ecNumber evidence="1">2.6.1.9</ecNumber>
    </recommendedName>
    <alternativeName>
        <fullName evidence="1">Imidazole acetol-phosphate transaminase</fullName>
    </alternativeName>
</protein>
<feature type="chain" id="PRO_0000153348" description="Histidinol-phosphate aminotransferase">
    <location>
        <begin position="1"/>
        <end position="366"/>
    </location>
</feature>
<feature type="modified residue" description="N6-(pyridoxal phosphate)lysine" evidence="1">
    <location>
        <position position="228"/>
    </location>
</feature>
<reference key="1">
    <citation type="journal article" date="2003" name="Nucleic Acids Res.">
        <title>The complete genome sequence and analysis of Corynebacterium diphtheriae NCTC13129.</title>
        <authorList>
            <person name="Cerdeno-Tarraga A.-M."/>
            <person name="Efstratiou A."/>
            <person name="Dover L.G."/>
            <person name="Holden M.T.G."/>
            <person name="Pallen M.J."/>
            <person name="Bentley S.D."/>
            <person name="Besra G.S."/>
            <person name="Churcher C.M."/>
            <person name="James K.D."/>
            <person name="De Zoysa A."/>
            <person name="Chillingworth T."/>
            <person name="Cronin A."/>
            <person name="Dowd L."/>
            <person name="Feltwell T."/>
            <person name="Hamlin N."/>
            <person name="Holroyd S."/>
            <person name="Jagels K."/>
            <person name="Moule S."/>
            <person name="Quail M.A."/>
            <person name="Rabbinowitsch E."/>
            <person name="Rutherford K.M."/>
            <person name="Thomson N.R."/>
            <person name="Unwin L."/>
            <person name="Whitehead S."/>
            <person name="Barrell B.G."/>
            <person name="Parkhill J."/>
        </authorList>
    </citation>
    <scope>NUCLEOTIDE SEQUENCE [LARGE SCALE GENOMIC DNA]</scope>
    <source>
        <strain>ATCC 700971 / NCTC 13129 / Biotype gravis</strain>
    </source>
</reference>
<gene>
    <name evidence="1" type="primary">hisC</name>
    <name type="ordered locus">DIP1565</name>
</gene>
<organism>
    <name type="scientific">Corynebacterium diphtheriae (strain ATCC 700971 / NCTC 13129 / Biotype gravis)</name>
    <dbReference type="NCBI Taxonomy" id="257309"/>
    <lineage>
        <taxon>Bacteria</taxon>
        <taxon>Bacillati</taxon>
        <taxon>Actinomycetota</taxon>
        <taxon>Actinomycetes</taxon>
        <taxon>Mycobacteriales</taxon>
        <taxon>Corynebacteriaceae</taxon>
        <taxon>Corynebacterium</taxon>
    </lineage>
</organism>
<evidence type="ECO:0000255" key="1">
    <source>
        <dbReference type="HAMAP-Rule" id="MF_01023"/>
    </source>
</evidence>
<proteinExistence type="inferred from homology"/>
<name>HIS8_CORDI</name>
<accession>P60999</accession>
<keyword id="KW-0028">Amino-acid biosynthesis</keyword>
<keyword id="KW-0032">Aminotransferase</keyword>
<keyword id="KW-0368">Histidine biosynthesis</keyword>
<keyword id="KW-0663">Pyridoxal phosphate</keyword>
<keyword id="KW-1185">Reference proteome</keyword>
<keyword id="KW-0808">Transferase</keyword>
<comment type="catalytic activity">
    <reaction evidence="1">
        <text>L-histidinol phosphate + 2-oxoglutarate = 3-(imidazol-4-yl)-2-oxopropyl phosphate + L-glutamate</text>
        <dbReference type="Rhea" id="RHEA:23744"/>
        <dbReference type="ChEBI" id="CHEBI:16810"/>
        <dbReference type="ChEBI" id="CHEBI:29985"/>
        <dbReference type="ChEBI" id="CHEBI:57766"/>
        <dbReference type="ChEBI" id="CHEBI:57980"/>
        <dbReference type="EC" id="2.6.1.9"/>
    </reaction>
</comment>
<comment type="cofactor">
    <cofactor evidence="1">
        <name>pyridoxal 5'-phosphate</name>
        <dbReference type="ChEBI" id="CHEBI:597326"/>
    </cofactor>
</comment>
<comment type="pathway">
    <text evidence="1">Amino-acid biosynthesis; L-histidine biosynthesis; L-histidine from 5-phospho-alpha-D-ribose 1-diphosphate: step 7/9.</text>
</comment>
<comment type="subunit">
    <text evidence="1">Homodimer.</text>
</comment>
<comment type="similarity">
    <text evidence="1">Belongs to the class-II pyridoxal-phosphate-dependent aminotransferase family. Histidinol-phosphate aminotransferase subfamily.</text>
</comment>
<dbReference type="EC" id="2.6.1.9" evidence="1"/>
<dbReference type="EMBL" id="BX248358">
    <property type="protein sequence ID" value="CAE50090.1"/>
    <property type="molecule type" value="Genomic_DNA"/>
</dbReference>
<dbReference type="RefSeq" id="WP_010935158.1">
    <property type="nucleotide sequence ID" value="NC_002935.2"/>
</dbReference>
<dbReference type="SMR" id="P60999"/>
<dbReference type="STRING" id="257309.DIP1565"/>
<dbReference type="KEGG" id="cdi:DIP1565"/>
<dbReference type="HOGENOM" id="CLU_017584_3_1_11"/>
<dbReference type="UniPathway" id="UPA00031">
    <property type="reaction ID" value="UER00012"/>
</dbReference>
<dbReference type="Proteomes" id="UP000002198">
    <property type="component" value="Chromosome"/>
</dbReference>
<dbReference type="GO" id="GO:0004400">
    <property type="term" value="F:histidinol-phosphate transaminase activity"/>
    <property type="evidence" value="ECO:0007669"/>
    <property type="project" value="UniProtKB-UniRule"/>
</dbReference>
<dbReference type="GO" id="GO:0030170">
    <property type="term" value="F:pyridoxal phosphate binding"/>
    <property type="evidence" value="ECO:0007669"/>
    <property type="project" value="InterPro"/>
</dbReference>
<dbReference type="GO" id="GO:0000105">
    <property type="term" value="P:L-histidine biosynthetic process"/>
    <property type="evidence" value="ECO:0007669"/>
    <property type="project" value="UniProtKB-UniRule"/>
</dbReference>
<dbReference type="CDD" id="cd00609">
    <property type="entry name" value="AAT_like"/>
    <property type="match status" value="1"/>
</dbReference>
<dbReference type="Gene3D" id="3.90.1150.10">
    <property type="entry name" value="Aspartate Aminotransferase, domain 1"/>
    <property type="match status" value="1"/>
</dbReference>
<dbReference type="Gene3D" id="3.40.640.10">
    <property type="entry name" value="Type I PLP-dependent aspartate aminotransferase-like (Major domain)"/>
    <property type="match status" value="1"/>
</dbReference>
<dbReference type="HAMAP" id="MF_01023">
    <property type="entry name" value="HisC_aminotrans_2"/>
    <property type="match status" value="1"/>
</dbReference>
<dbReference type="InterPro" id="IPR004839">
    <property type="entry name" value="Aminotransferase_I/II_large"/>
</dbReference>
<dbReference type="InterPro" id="IPR005861">
    <property type="entry name" value="HisP_aminotrans"/>
</dbReference>
<dbReference type="InterPro" id="IPR015424">
    <property type="entry name" value="PyrdxlP-dep_Trfase"/>
</dbReference>
<dbReference type="InterPro" id="IPR015421">
    <property type="entry name" value="PyrdxlP-dep_Trfase_major"/>
</dbReference>
<dbReference type="InterPro" id="IPR015422">
    <property type="entry name" value="PyrdxlP-dep_Trfase_small"/>
</dbReference>
<dbReference type="NCBIfam" id="TIGR01141">
    <property type="entry name" value="hisC"/>
    <property type="match status" value="1"/>
</dbReference>
<dbReference type="NCBIfam" id="NF002877">
    <property type="entry name" value="PRK03317.1"/>
    <property type="match status" value="1"/>
</dbReference>
<dbReference type="PANTHER" id="PTHR42885:SF2">
    <property type="entry name" value="HISTIDINOL-PHOSPHATE AMINOTRANSFERASE"/>
    <property type="match status" value="1"/>
</dbReference>
<dbReference type="PANTHER" id="PTHR42885">
    <property type="entry name" value="HISTIDINOL-PHOSPHATE AMINOTRANSFERASE-RELATED"/>
    <property type="match status" value="1"/>
</dbReference>
<dbReference type="Pfam" id="PF00155">
    <property type="entry name" value="Aminotran_1_2"/>
    <property type="match status" value="1"/>
</dbReference>
<dbReference type="SUPFAM" id="SSF53383">
    <property type="entry name" value="PLP-dependent transferases"/>
    <property type="match status" value="1"/>
</dbReference>